<feature type="chain" id="PRO_0000295161" description="AT-rich interactive domain-containing protein 3A">
    <location>
        <begin position="1"/>
        <end position="541"/>
    </location>
</feature>
<feature type="domain" description="ARID" evidence="2">
    <location>
        <begin position="212"/>
        <end position="304"/>
    </location>
</feature>
<feature type="domain" description="REKLES" evidence="3">
    <location>
        <begin position="407"/>
        <end position="501"/>
    </location>
</feature>
<feature type="region of interest" description="Disordered" evidence="4">
    <location>
        <begin position="17"/>
        <end position="172"/>
    </location>
</feature>
<feature type="region of interest" description="Important for nuclear localization" evidence="1">
    <location>
        <begin position="408"/>
        <end position="450"/>
    </location>
</feature>
<feature type="region of interest" description="Homodimerization" evidence="1">
    <location>
        <begin position="452"/>
        <end position="473"/>
    </location>
</feature>
<feature type="region of interest" description="Important for cytoplasmic localization" evidence="1">
    <location>
        <begin position="497"/>
        <end position="504"/>
    </location>
</feature>
<feature type="region of interest" description="Disordered" evidence="4">
    <location>
        <begin position="499"/>
        <end position="541"/>
    </location>
</feature>
<feature type="compositionally biased region" description="Low complexity" evidence="4">
    <location>
        <begin position="55"/>
        <end position="73"/>
    </location>
</feature>
<feature type="compositionally biased region" description="Acidic residues" evidence="4">
    <location>
        <begin position="84"/>
        <end position="102"/>
    </location>
</feature>
<feature type="compositionally biased region" description="Basic and acidic residues" evidence="4">
    <location>
        <begin position="103"/>
        <end position="112"/>
    </location>
</feature>
<feature type="compositionally biased region" description="Acidic residues" evidence="4">
    <location>
        <begin position="115"/>
        <end position="144"/>
    </location>
</feature>
<reference key="1">
    <citation type="submission" date="2006-10" db="EMBL/GenBank/DDBJ databases">
        <authorList>
            <consortium name="Sanger Xenopus tropicalis EST/cDNA project"/>
        </authorList>
    </citation>
    <scope>NUCLEOTIDE SEQUENCE [LARGE SCALE MRNA]</scope>
    <source>
        <tissue>Neurula</tissue>
    </source>
</reference>
<reference key="2">
    <citation type="submission" date="2004-10" db="EMBL/GenBank/DDBJ databases">
        <authorList>
            <consortium name="NIH - Xenopus Gene Collection (XGC) project"/>
        </authorList>
    </citation>
    <scope>NUCLEOTIDE SEQUENCE [LARGE SCALE MRNA]</scope>
    <source>
        <tissue>Embryo</tissue>
    </source>
</reference>
<reference key="3">
    <citation type="journal article" date="2005" name="Dev. Biol.">
        <title>The ARID domain protein dril1 is necessary for TGF(beta) signaling in Xenopus embryos.</title>
        <authorList>
            <person name="Callery E.M."/>
            <person name="Smith J.C."/>
            <person name="Thomsen G.H."/>
        </authorList>
    </citation>
    <scope>IDENTIFICATION</scope>
    <scope>FUNCTION</scope>
</reference>
<evidence type="ECO:0000250" key="1"/>
<evidence type="ECO:0000255" key="2">
    <source>
        <dbReference type="PROSITE-ProRule" id="PRU00355"/>
    </source>
</evidence>
<evidence type="ECO:0000255" key="3">
    <source>
        <dbReference type="PROSITE-ProRule" id="PRU00819"/>
    </source>
</evidence>
<evidence type="ECO:0000256" key="4">
    <source>
        <dbReference type="SAM" id="MobiDB-lite"/>
    </source>
</evidence>
<evidence type="ECO:0000269" key="5">
    <source>
    </source>
</evidence>
<sequence length="541" mass="58757">MKLQAVMETLQRQQRARLQQELEARQLQQDSSEGRTPPSVGYPGNGSEEAEPEALKIQRAQAAALAAMRAAAAGLSQQPSPAASDEEEEDGESMASDEEDEKERDGESERYPDMGSEEEDLKGKWDEDDFEDEGEEDDYEDMEEGMGVSEAGRVGKGSTLPPKHPNPQAFPTQRSVGAERAGLPHTGHPQLQDHGDWTYEEQFKQLYELDGDPKRKEFLDDLFSFMQKRGTPVNRIPIMAKQVLDLYMLYVLVTEKGGLVEVINKKLWREITKGLNLPTSITSAAFTLRTQYMKYLYPYECEKRGLSNPNELQAAIDSNRREGRRQSFGGSLFTYSPSGAPSMLSSPKLQVSALSLGGVATNGSSLSSMQKIKKEEDSPISLTVPPRIPVSLAGHSMVAAQVAAQAAALEQLREKLESGEPPEKKMALGTEEQQRLQRAIQHNLLAMTAQLPMNIRINSQAEGRQDSAVNLTTNGTNSISMSVELNGIVYTGVLFAQPPTSASGTSKGSSNRTGSIGGGSSTSQAAPPPAPSAPTSNNPSP</sequence>
<proteinExistence type="evidence at transcript level"/>
<protein>
    <recommendedName>
        <fullName>AT-rich interactive domain-containing protein 3A</fullName>
        <shortName>ARID domain-containing protein 3A</shortName>
    </recommendedName>
    <alternativeName>
        <fullName>Bright homolog</fullName>
    </alternativeName>
    <alternativeName>
        <fullName>Dead ringer-like protein 1</fullName>
    </alternativeName>
</protein>
<comment type="function">
    <text evidence="5">Transcription factor required for smad1 and smad2-mediated responses to TGFbeta during mesoderm induction.</text>
</comment>
<comment type="subunit">
    <text evidence="1">Homodimer.</text>
</comment>
<comment type="subcellular location">
    <subcellularLocation>
        <location evidence="2">Nucleus</location>
    </subcellularLocation>
    <subcellularLocation>
        <location evidence="1">Cytoplasm</location>
    </subcellularLocation>
    <text evidence="1">Shuttles between nucleus and cytoplasm.</text>
</comment>
<organism>
    <name type="scientific">Xenopus tropicalis</name>
    <name type="common">Western clawed frog</name>
    <name type="synonym">Silurana tropicalis</name>
    <dbReference type="NCBI Taxonomy" id="8364"/>
    <lineage>
        <taxon>Eukaryota</taxon>
        <taxon>Metazoa</taxon>
        <taxon>Chordata</taxon>
        <taxon>Craniata</taxon>
        <taxon>Vertebrata</taxon>
        <taxon>Euteleostomi</taxon>
        <taxon>Amphibia</taxon>
        <taxon>Batrachia</taxon>
        <taxon>Anura</taxon>
        <taxon>Pipoidea</taxon>
        <taxon>Pipidae</taxon>
        <taxon>Xenopodinae</taxon>
        <taxon>Xenopus</taxon>
        <taxon>Silurana</taxon>
    </lineage>
</organism>
<name>ARI3A_XENTR</name>
<accession>Q5XGD9</accession>
<dbReference type="EMBL" id="CR759981">
    <property type="protein sequence ID" value="CAJ82754.1"/>
    <property type="molecule type" value="mRNA"/>
</dbReference>
<dbReference type="EMBL" id="BC084503">
    <property type="protein sequence ID" value="AAH84503.1"/>
    <property type="molecule type" value="mRNA"/>
</dbReference>
<dbReference type="RefSeq" id="NP_001011106.1">
    <property type="nucleotide sequence ID" value="NM_001011106.1"/>
</dbReference>
<dbReference type="RefSeq" id="XP_012816175.1">
    <property type="nucleotide sequence ID" value="XM_012960721.2"/>
</dbReference>
<dbReference type="RefSeq" id="XP_012816184.1">
    <property type="nucleotide sequence ID" value="XM_012960730.3"/>
</dbReference>
<dbReference type="RefSeq" id="XP_012816186.1">
    <property type="nucleotide sequence ID" value="XM_012960732.3"/>
</dbReference>
<dbReference type="RefSeq" id="XP_012816189.1">
    <property type="nucleotide sequence ID" value="XM_012960735.3"/>
</dbReference>
<dbReference type="SMR" id="Q5XGD9"/>
<dbReference type="FunCoup" id="Q5XGD9">
    <property type="interactions" value="2217"/>
</dbReference>
<dbReference type="STRING" id="8364.ENSXETP00000038464"/>
<dbReference type="PaxDb" id="8364-ENSXETP00000056949"/>
<dbReference type="DNASU" id="496519"/>
<dbReference type="GeneID" id="496519"/>
<dbReference type="KEGG" id="xtr:496519"/>
<dbReference type="AGR" id="Xenbase:XB-GENE-945264"/>
<dbReference type="CTD" id="1820"/>
<dbReference type="Xenbase" id="XB-GENE-945264">
    <property type="gene designation" value="arid3a"/>
</dbReference>
<dbReference type="eggNOG" id="KOG2744">
    <property type="taxonomic scope" value="Eukaryota"/>
</dbReference>
<dbReference type="HOGENOM" id="CLU_026952_3_0_1"/>
<dbReference type="InParanoid" id="Q5XGD9"/>
<dbReference type="OMA" id="MKPKWEE"/>
<dbReference type="OrthoDB" id="10044343at2759"/>
<dbReference type="PhylomeDB" id="Q5XGD9"/>
<dbReference type="Proteomes" id="UP000008143">
    <property type="component" value="Chromosome 1"/>
</dbReference>
<dbReference type="Bgee" id="ENSXETG00000021613">
    <property type="expression patterns" value="Expressed in neurula embryo and 11 other cell types or tissues"/>
</dbReference>
<dbReference type="ExpressionAtlas" id="Q5XGD9">
    <property type="expression patterns" value="baseline"/>
</dbReference>
<dbReference type="GO" id="GO:0005737">
    <property type="term" value="C:cytoplasm"/>
    <property type="evidence" value="ECO:0007669"/>
    <property type="project" value="UniProtKB-SubCell"/>
</dbReference>
<dbReference type="GO" id="GO:0005634">
    <property type="term" value="C:nucleus"/>
    <property type="evidence" value="ECO:0007669"/>
    <property type="project" value="UniProtKB-SubCell"/>
</dbReference>
<dbReference type="GO" id="GO:0003677">
    <property type="term" value="F:DNA binding"/>
    <property type="evidence" value="ECO:0007669"/>
    <property type="project" value="UniProtKB-KW"/>
</dbReference>
<dbReference type="GO" id="GO:0006357">
    <property type="term" value="P:regulation of transcription by RNA polymerase II"/>
    <property type="evidence" value="ECO:0007669"/>
    <property type="project" value="InterPro"/>
</dbReference>
<dbReference type="CDD" id="cd16878">
    <property type="entry name" value="ARID_ARID3A"/>
    <property type="match status" value="1"/>
</dbReference>
<dbReference type="FunFam" id="1.10.150.60:FF:000006">
    <property type="entry name" value="AT-rich interactive domain-containing protein 3A"/>
    <property type="match status" value="1"/>
</dbReference>
<dbReference type="Gene3D" id="1.10.150.60">
    <property type="entry name" value="ARID DNA-binding domain"/>
    <property type="match status" value="1"/>
</dbReference>
<dbReference type="InterPro" id="IPR045147">
    <property type="entry name" value="ARI3A/B/C"/>
</dbReference>
<dbReference type="InterPro" id="IPR001606">
    <property type="entry name" value="ARID_dom"/>
</dbReference>
<dbReference type="InterPro" id="IPR036431">
    <property type="entry name" value="ARID_dom_sf"/>
</dbReference>
<dbReference type="InterPro" id="IPR023334">
    <property type="entry name" value="REKLES_domain"/>
</dbReference>
<dbReference type="PANTHER" id="PTHR15348:SF1">
    <property type="entry name" value="AT-RICH INTERACTIVE DOMAIN-CONTAINING PROTEIN 3A"/>
    <property type="match status" value="1"/>
</dbReference>
<dbReference type="PANTHER" id="PTHR15348">
    <property type="entry name" value="AT-RICH INTERACTIVE DOMAIN-CONTAINING PROTEIN ARID DOMAIN- CONTAINING PROTEIN DEAD RINGER PROTEIN B-CELL REGULATOR OF IGH TRANSCRIPTION BRIGHT"/>
    <property type="match status" value="1"/>
</dbReference>
<dbReference type="Pfam" id="PF01388">
    <property type="entry name" value="ARID"/>
    <property type="match status" value="1"/>
</dbReference>
<dbReference type="SMART" id="SM01014">
    <property type="entry name" value="ARID"/>
    <property type="match status" value="1"/>
</dbReference>
<dbReference type="SMART" id="SM00501">
    <property type="entry name" value="BRIGHT"/>
    <property type="match status" value="1"/>
</dbReference>
<dbReference type="SUPFAM" id="SSF46774">
    <property type="entry name" value="ARID-like"/>
    <property type="match status" value="1"/>
</dbReference>
<dbReference type="PROSITE" id="PS51011">
    <property type="entry name" value="ARID"/>
    <property type="match status" value="1"/>
</dbReference>
<dbReference type="PROSITE" id="PS51486">
    <property type="entry name" value="REKLES"/>
    <property type="match status" value="1"/>
</dbReference>
<keyword id="KW-0963">Cytoplasm</keyword>
<keyword id="KW-0217">Developmental protein</keyword>
<keyword id="KW-0238">DNA-binding</keyword>
<keyword id="KW-0539">Nucleus</keyword>
<keyword id="KW-1185">Reference proteome</keyword>
<keyword id="KW-0804">Transcription</keyword>
<keyword id="KW-0805">Transcription regulation</keyword>
<gene>
    <name type="primary">arid3a</name>
    <name type="synonym">dril1</name>
    <name type="ORF">TNeu118e10.1</name>
</gene>